<comment type="function">
    <text evidence="1">Component of the cytochrome b6-f complex, which mediates electron transfer between photosystem II (PSII) and photosystem I (PSI), cyclic electron flow around PSI, and state transitions. PetG is required for either the stability or assembly of the cytochrome b6-f complex.</text>
</comment>
<comment type="subunit">
    <text evidence="1">The 4 large subunits of the cytochrome b6-f complex are cytochrome b6, subunit IV (17 kDa polypeptide, PetD), cytochrome f and the Rieske protein, while the 4 small subunits are PetG, PetL, PetM and PetN. The complex functions as a dimer.</text>
</comment>
<comment type="subcellular location">
    <subcellularLocation>
        <location evidence="1">Plastid</location>
        <location evidence="1">Chloroplast thylakoid membrane</location>
        <topology evidence="1">Single-pass membrane protein</topology>
    </subcellularLocation>
</comment>
<comment type="similarity">
    <text evidence="1">Belongs to the PetG family.</text>
</comment>
<sequence>MIEVFLFGIVLGLIPITLAGLFVTAYLQYRRGDQLDL</sequence>
<organism>
    <name type="scientific">Atropa belladonna</name>
    <name type="common">Belladonna</name>
    <name type="synonym">Deadly nightshade</name>
    <dbReference type="NCBI Taxonomy" id="33113"/>
    <lineage>
        <taxon>Eukaryota</taxon>
        <taxon>Viridiplantae</taxon>
        <taxon>Streptophyta</taxon>
        <taxon>Embryophyta</taxon>
        <taxon>Tracheophyta</taxon>
        <taxon>Spermatophyta</taxon>
        <taxon>Magnoliopsida</taxon>
        <taxon>eudicotyledons</taxon>
        <taxon>Gunneridae</taxon>
        <taxon>Pentapetalae</taxon>
        <taxon>asterids</taxon>
        <taxon>lamiids</taxon>
        <taxon>Solanales</taxon>
        <taxon>Solanaceae</taxon>
        <taxon>Solanoideae</taxon>
        <taxon>Hyoscyameae</taxon>
        <taxon>Atropa</taxon>
    </lineage>
</organism>
<accession>Q7FNS7</accession>
<dbReference type="EMBL" id="AJ316582">
    <property type="protein sequence ID" value="CAC88063.1"/>
    <property type="molecule type" value="Genomic_DNA"/>
</dbReference>
<dbReference type="RefSeq" id="NP_783251.1">
    <property type="nucleotide sequence ID" value="NC_004561.1"/>
</dbReference>
<dbReference type="SMR" id="Q7FNS7"/>
<dbReference type="GeneID" id="806477"/>
<dbReference type="GO" id="GO:0009535">
    <property type="term" value="C:chloroplast thylakoid membrane"/>
    <property type="evidence" value="ECO:0007669"/>
    <property type="project" value="UniProtKB-SubCell"/>
</dbReference>
<dbReference type="GO" id="GO:0009512">
    <property type="term" value="C:cytochrome b6f complex"/>
    <property type="evidence" value="ECO:0007669"/>
    <property type="project" value="InterPro"/>
</dbReference>
<dbReference type="GO" id="GO:0045158">
    <property type="term" value="F:electron transporter, transferring electrons within cytochrome b6/f complex of photosystem II activity"/>
    <property type="evidence" value="ECO:0007669"/>
    <property type="project" value="UniProtKB-UniRule"/>
</dbReference>
<dbReference type="GO" id="GO:0017004">
    <property type="term" value="P:cytochrome complex assembly"/>
    <property type="evidence" value="ECO:0007669"/>
    <property type="project" value="UniProtKB-UniRule"/>
</dbReference>
<dbReference type="GO" id="GO:0015979">
    <property type="term" value="P:photosynthesis"/>
    <property type="evidence" value="ECO:0007669"/>
    <property type="project" value="UniProtKB-KW"/>
</dbReference>
<dbReference type="HAMAP" id="MF_00432">
    <property type="entry name" value="Cytb6_f_PetG"/>
    <property type="match status" value="1"/>
</dbReference>
<dbReference type="InterPro" id="IPR003683">
    <property type="entry name" value="Cyt_6/f_cplx_su5"/>
</dbReference>
<dbReference type="InterPro" id="IPR036099">
    <property type="entry name" value="Cyt_6/f_cplx_su5_sf"/>
</dbReference>
<dbReference type="NCBIfam" id="NF001907">
    <property type="entry name" value="PRK00665.1"/>
    <property type="match status" value="1"/>
</dbReference>
<dbReference type="Pfam" id="PF02529">
    <property type="entry name" value="PetG"/>
    <property type="match status" value="1"/>
</dbReference>
<dbReference type="PIRSF" id="PIRSF000034">
    <property type="entry name" value="Cyt_b6-f_V"/>
    <property type="match status" value="1"/>
</dbReference>
<dbReference type="SUPFAM" id="SSF103446">
    <property type="entry name" value="PetG subunit of the cytochrome b6f complex"/>
    <property type="match status" value="1"/>
</dbReference>
<proteinExistence type="inferred from homology"/>
<evidence type="ECO:0000255" key="1">
    <source>
        <dbReference type="HAMAP-Rule" id="MF_00432"/>
    </source>
</evidence>
<feature type="chain" id="PRO_0000216369" description="Cytochrome b6-f complex subunit 5">
    <location>
        <begin position="1"/>
        <end position="37"/>
    </location>
</feature>
<feature type="transmembrane region" description="Helical" evidence="1">
    <location>
        <begin position="5"/>
        <end position="25"/>
    </location>
</feature>
<keyword id="KW-0150">Chloroplast</keyword>
<keyword id="KW-0249">Electron transport</keyword>
<keyword id="KW-0472">Membrane</keyword>
<keyword id="KW-0602">Photosynthesis</keyword>
<keyword id="KW-0934">Plastid</keyword>
<keyword id="KW-0793">Thylakoid</keyword>
<keyword id="KW-0812">Transmembrane</keyword>
<keyword id="KW-1133">Transmembrane helix</keyword>
<keyword id="KW-0813">Transport</keyword>
<protein>
    <recommendedName>
        <fullName evidence="1">Cytochrome b6-f complex subunit 5</fullName>
    </recommendedName>
    <alternativeName>
        <fullName evidence="1">Cytochrome b6-f complex subunit PetG</fullName>
    </alternativeName>
    <alternativeName>
        <fullName evidence="1">Cytochrome b6-f complex subunit V</fullName>
    </alternativeName>
</protein>
<gene>
    <name evidence="1" type="primary">petG</name>
</gene>
<geneLocation type="chloroplast"/>
<reference key="1">
    <citation type="journal article" date="2002" name="Mol. Biol. Evol.">
        <title>The plastid chromosome of Atropa belladonna and its comparison with that of Nicotiana tabacum: the role of RNA editing in generating divergence in the process of plant speciation.</title>
        <authorList>
            <person name="Schmitz-Linneweber C."/>
            <person name="Regel R."/>
            <person name="Du T.G."/>
            <person name="Hupfer H."/>
            <person name="Herrmann R.G."/>
            <person name="Maier R.M."/>
        </authorList>
    </citation>
    <scope>NUCLEOTIDE SEQUENCE [LARGE SCALE GENOMIC DNA]</scope>
    <source>
        <strain>cv. Ab5p(kan)</strain>
    </source>
</reference>
<name>PETG_ATRBE</name>